<proteinExistence type="evidence at protein level"/>
<accession>Q9QZ86</accession>
<accession>O88525</accession>
<sequence length="534" mass="60071">MLVLFETSVGYAIFKVLNEKKLQEVDSLWKEFETPEKANKIVKLKHFEKFQDTAEALAAFTALMEGKINKQLKKVLKKIVKEAHEPLAVADAKLGGVIKEKLNLSCIHSPVVNELMRGIRSQMDGLIPGVEPREMAAMCLGLAHSLSRYRLKFSADKVDTMIVQAISLLDDLDKELNNYIMRCREWYGWHFPELGKIISDNLTYCKCLQKVGDRKNYASATLSEFLSEEVEAEVKAAAEISMGTEVSEEDICNILHLCTQVIEISEYRTQLYEYLQNRMMAIAPNVTVMVGELVGARLIAHAGSLLNLAKHAASTVQILGAEKALFRALKSRRDTPKYGLIYHASLVGQTSPKHKGKISRMLAAKTVLAIRYDAFGEDSSSAMGAENRAKLEARLRILEDRGIRKISGTGKALAKAEKYEHKSEVKTYDPSGDSTLPTCSKKRKIEEVDKEDEITEKKAKKAKIKIKAEVEEEMEEAEEEQVVEEEPTVKKKKKKDKKKHIKEEPLSEEEPCTSTAVPSPEKKKKKKKKKDAED</sequence>
<evidence type="ECO:0000250" key="1"/>
<evidence type="ECO:0000250" key="2">
    <source>
        <dbReference type="UniProtKB" id="Q9Y2X3"/>
    </source>
</evidence>
<evidence type="ECO:0000255" key="3">
    <source>
        <dbReference type="PROSITE-ProRule" id="PRU00690"/>
    </source>
</evidence>
<evidence type="ECO:0000256" key="4">
    <source>
        <dbReference type="SAM" id="MobiDB-lite"/>
    </source>
</evidence>
<evidence type="ECO:0000269" key="5">
    <source>
    </source>
</evidence>
<evidence type="ECO:0000305" key="6"/>
<evidence type="ECO:0007744" key="7">
    <source>
    </source>
</evidence>
<comment type="function">
    <text evidence="2">Required for the biogenesis of box C/D snoRNAs such as U3, U8 and U14 snoRNAs. Part of the small subunit (SSU) processome, first precursor of the small eukaryotic ribosomal subunit. During the assembly of the SSU processome in the nucleolus, many ribosome biogenesis factors, an RNA chaperone and ribosomal proteins associate with the nascent pre-rRNA and work in concert to generate RNA folding, modifications, rearrangements and cleavage as well as targeted degradation of pre-ribosomal RNA by the RNA exosome. Core component of box C/D small nucleolar ribonucleoprotein (snoRNP) complexes that function in methylation of multiple sites on ribosomal RNAs (rRNAs) and messenger RNAs (mRNAs).</text>
</comment>
<comment type="subunit">
    <text evidence="2 5">Core component of box C/D small nucleolar ribonucleoprotein (snoRNP) particles; the core proteins SNU13, NOP56, NOP58 and FBL or FBLL1 assemble stepwise onto the snoRNA (By similarity). Interacts with NOLC1/Nopp140 (PubMed:10679015). Interacts with NOPCHAP1, NUFIP1, RUVBL1 and RUVBL2; NOPCHAP1 bridges the association of NOP58 with RUVBL1:RUVBL2 and NUFIP1. Interacts with PIH1D1. Part of the small subunit (SSU) processome, composed of more than 70 proteins and the RNA chaperone small nucleolar RNA (snoRNA) U3 (By similarity).</text>
</comment>
<comment type="subcellular location">
    <subcellularLocation>
        <location evidence="2">Nucleus</location>
        <location evidence="2">Nucleolus</location>
    </subcellularLocation>
    <subcellularLocation>
        <location evidence="2">Nucleus</location>
        <location evidence="2">Nucleoplasm</location>
    </subcellularLocation>
    <text evidence="2">Localizes to the nucleolus with a minor part present in the nucleoplasm.</text>
</comment>
<comment type="PTM">
    <text evidence="2">Sumoylation is essential for high-affinity binding to snoRNAs.</text>
</comment>
<comment type="similarity">
    <text evidence="6">Belongs to the NOP5/NOP56 family.</text>
</comment>
<protein>
    <recommendedName>
        <fullName>Nucleolar protein 58</fullName>
    </recommendedName>
    <alternativeName>
        <fullName>Nopp140-associated protein of 65 kDa</fullName>
    </alternativeName>
    <alternativeName>
        <fullName>Nucleolar protein 5</fullName>
    </alternativeName>
</protein>
<dbReference type="EMBL" id="AF194371">
    <property type="protein sequence ID" value="AAF05769.1"/>
    <property type="molecule type" value="mRNA"/>
</dbReference>
<dbReference type="EMBL" id="AF069782">
    <property type="protein sequence ID" value="AAC23535.1"/>
    <property type="molecule type" value="mRNA"/>
</dbReference>
<dbReference type="RefSeq" id="NP_068522.1">
    <property type="nucleotide sequence ID" value="NM_021754.2"/>
</dbReference>
<dbReference type="SMR" id="Q9QZ86"/>
<dbReference type="BioGRID" id="248802">
    <property type="interactions" value="1"/>
</dbReference>
<dbReference type="FunCoup" id="Q9QZ86">
    <property type="interactions" value="3891"/>
</dbReference>
<dbReference type="IntAct" id="Q9QZ86">
    <property type="interactions" value="2"/>
</dbReference>
<dbReference type="STRING" id="10116.ENSRNOP00000022676"/>
<dbReference type="iPTMnet" id="Q9QZ86"/>
<dbReference type="PhosphoSitePlus" id="Q9QZ86"/>
<dbReference type="jPOST" id="Q9QZ86"/>
<dbReference type="PaxDb" id="10116-ENSRNOP00000022676"/>
<dbReference type="Ensembl" id="ENSRNOT00000022676.7">
    <property type="protein sequence ID" value="ENSRNOP00000022676.3"/>
    <property type="gene ID" value="ENSRNOG00000016486.7"/>
</dbReference>
<dbReference type="GeneID" id="60373"/>
<dbReference type="KEGG" id="rno:60373"/>
<dbReference type="UCSC" id="RGD:620484">
    <property type="organism name" value="rat"/>
</dbReference>
<dbReference type="AGR" id="RGD:620484"/>
<dbReference type="CTD" id="51602"/>
<dbReference type="RGD" id="620484">
    <property type="gene designation" value="Nop58"/>
</dbReference>
<dbReference type="eggNOG" id="KOG2572">
    <property type="taxonomic scope" value="Eukaryota"/>
</dbReference>
<dbReference type="GeneTree" id="ENSGT00940000153534"/>
<dbReference type="InParanoid" id="Q9QZ86"/>
<dbReference type="OMA" id="MGMRSNW"/>
<dbReference type="OrthoDB" id="6780543at2759"/>
<dbReference type="PhylomeDB" id="Q9QZ86"/>
<dbReference type="TreeFam" id="TF105688"/>
<dbReference type="Reactome" id="R-RNO-4570464">
    <property type="pathway name" value="SUMOylation of RNA binding proteins"/>
</dbReference>
<dbReference type="Reactome" id="R-RNO-6791226">
    <property type="pathway name" value="Major pathway of rRNA processing in the nucleolus and cytosol"/>
</dbReference>
<dbReference type="PRO" id="PR:Q9QZ86"/>
<dbReference type="Proteomes" id="UP000002494">
    <property type="component" value="Chromosome 9"/>
</dbReference>
<dbReference type="Bgee" id="ENSRNOG00000016486">
    <property type="expression patterns" value="Expressed in ovary and 20 other cell types or tissues"/>
</dbReference>
<dbReference type="ExpressionAtlas" id="Q9QZ86">
    <property type="expression patterns" value="baseline and differential"/>
</dbReference>
<dbReference type="GO" id="GO:0031428">
    <property type="term" value="C:box C/D methylation guide snoRNP complex"/>
    <property type="evidence" value="ECO:0000266"/>
    <property type="project" value="RGD"/>
</dbReference>
<dbReference type="GO" id="GO:0015030">
    <property type="term" value="C:Cajal body"/>
    <property type="evidence" value="ECO:0000266"/>
    <property type="project" value="RGD"/>
</dbReference>
<dbReference type="GO" id="GO:0005829">
    <property type="term" value="C:cytosol"/>
    <property type="evidence" value="ECO:0007669"/>
    <property type="project" value="Ensembl"/>
</dbReference>
<dbReference type="GO" id="GO:0001650">
    <property type="term" value="C:fibrillar center"/>
    <property type="evidence" value="ECO:0007669"/>
    <property type="project" value="Ensembl"/>
</dbReference>
<dbReference type="GO" id="GO:0005730">
    <property type="term" value="C:nucleolus"/>
    <property type="evidence" value="ECO:0000266"/>
    <property type="project" value="RGD"/>
</dbReference>
<dbReference type="GO" id="GO:0070761">
    <property type="term" value="C:pre-snoRNP complex"/>
    <property type="evidence" value="ECO:0000266"/>
    <property type="project" value="RGD"/>
</dbReference>
<dbReference type="GO" id="GO:0032040">
    <property type="term" value="C:small-subunit processome"/>
    <property type="evidence" value="ECO:0000250"/>
    <property type="project" value="UniProtKB"/>
</dbReference>
<dbReference type="GO" id="GO:0005732">
    <property type="term" value="C:sno(s)RNA-containing ribonucleoprotein complex"/>
    <property type="evidence" value="ECO:0000266"/>
    <property type="project" value="RGD"/>
</dbReference>
<dbReference type="GO" id="GO:0051117">
    <property type="term" value="F:ATPase binding"/>
    <property type="evidence" value="ECO:0000266"/>
    <property type="project" value="RGD"/>
</dbReference>
<dbReference type="GO" id="GO:0030515">
    <property type="term" value="F:snoRNA binding"/>
    <property type="evidence" value="ECO:0000266"/>
    <property type="project" value="RGD"/>
</dbReference>
<dbReference type="GO" id="GO:0001094">
    <property type="term" value="F:TFIID-class transcription factor complex binding"/>
    <property type="evidence" value="ECO:0000266"/>
    <property type="project" value="RGD"/>
</dbReference>
<dbReference type="GO" id="GO:0042274">
    <property type="term" value="P:ribosomal small subunit biogenesis"/>
    <property type="evidence" value="ECO:0000250"/>
    <property type="project" value="UniProtKB"/>
</dbReference>
<dbReference type="GO" id="GO:0048254">
    <property type="term" value="P:snoRNA localization"/>
    <property type="evidence" value="ECO:0000266"/>
    <property type="project" value="RGD"/>
</dbReference>
<dbReference type="FunFam" id="1.10.246.90:FF:000004">
    <property type="entry name" value="Nucleolar protein 58"/>
    <property type="match status" value="1"/>
</dbReference>
<dbReference type="FunFam" id="1.10.287.4070:FF:000001">
    <property type="entry name" value="Probable Nucleolar protein 58"/>
    <property type="match status" value="1"/>
</dbReference>
<dbReference type="Gene3D" id="1.10.287.4070">
    <property type="match status" value="1"/>
</dbReference>
<dbReference type="Gene3D" id="1.10.246.90">
    <property type="entry name" value="Nop domain"/>
    <property type="match status" value="1"/>
</dbReference>
<dbReference type="InterPro" id="IPR045056">
    <property type="entry name" value="Nop56/Nop58"/>
</dbReference>
<dbReference type="InterPro" id="IPR012974">
    <property type="entry name" value="NOP58/56_N"/>
</dbReference>
<dbReference type="InterPro" id="IPR042239">
    <property type="entry name" value="Nop_C"/>
</dbReference>
<dbReference type="InterPro" id="IPR002687">
    <property type="entry name" value="Nop_dom"/>
</dbReference>
<dbReference type="InterPro" id="IPR036070">
    <property type="entry name" value="Nop_dom_sf"/>
</dbReference>
<dbReference type="InterPro" id="IPR012976">
    <property type="entry name" value="NOSIC"/>
</dbReference>
<dbReference type="PANTHER" id="PTHR10894">
    <property type="entry name" value="NUCLEOLAR PROTEIN 5 NUCLEOLAR PROTEIN NOP5 NOP58"/>
    <property type="match status" value="1"/>
</dbReference>
<dbReference type="PANTHER" id="PTHR10894:SF1">
    <property type="entry name" value="NUCLEOLAR PROTEIN 58"/>
    <property type="match status" value="1"/>
</dbReference>
<dbReference type="Pfam" id="PF01798">
    <property type="entry name" value="Nop"/>
    <property type="match status" value="1"/>
</dbReference>
<dbReference type="Pfam" id="PF08156">
    <property type="entry name" value="NOP5NT"/>
    <property type="match status" value="1"/>
</dbReference>
<dbReference type="SMART" id="SM00931">
    <property type="entry name" value="NOSIC"/>
    <property type="match status" value="1"/>
</dbReference>
<dbReference type="SUPFAM" id="SSF89124">
    <property type="entry name" value="Nop domain"/>
    <property type="match status" value="1"/>
</dbReference>
<dbReference type="PROSITE" id="PS51358">
    <property type="entry name" value="NOP"/>
    <property type="match status" value="1"/>
</dbReference>
<name>NOP58_RAT</name>
<organism>
    <name type="scientific">Rattus norvegicus</name>
    <name type="common">Rat</name>
    <dbReference type="NCBI Taxonomy" id="10116"/>
    <lineage>
        <taxon>Eukaryota</taxon>
        <taxon>Metazoa</taxon>
        <taxon>Chordata</taxon>
        <taxon>Craniata</taxon>
        <taxon>Vertebrata</taxon>
        <taxon>Euteleostomi</taxon>
        <taxon>Mammalia</taxon>
        <taxon>Eutheria</taxon>
        <taxon>Euarchontoglires</taxon>
        <taxon>Glires</taxon>
        <taxon>Rodentia</taxon>
        <taxon>Myomorpha</taxon>
        <taxon>Muroidea</taxon>
        <taxon>Muridae</taxon>
        <taxon>Murinae</taxon>
        <taxon>Rattus</taxon>
    </lineage>
</organism>
<keyword id="KW-0903">Direct protein sequencing</keyword>
<keyword id="KW-1017">Isopeptide bond</keyword>
<keyword id="KW-0539">Nucleus</keyword>
<keyword id="KW-0597">Phosphoprotein</keyword>
<keyword id="KW-1185">Reference proteome</keyword>
<keyword id="KW-0687">Ribonucleoprotein</keyword>
<keyword id="KW-0690">Ribosome biogenesis</keyword>
<keyword id="KW-0832">Ubl conjugation</keyword>
<feature type="chain" id="PRO_0000219024" description="Nucleolar protein 58">
    <location>
        <begin position="1"/>
        <end position="534"/>
    </location>
</feature>
<feature type="domain" description="Nop" evidence="3">
    <location>
        <begin position="282"/>
        <end position="400"/>
    </location>
</feature>
<feature type="region of interest" description="Disordered" evidence="4">
    <location>
        <begin position="470"/>
        <end position="534"/>
    </location>
</feature>
<feature type="compositionally biased region" description="Acidic residues" evidence="4">
    <location>
        <begin position="470"/>
        <end position="486"/>
    </location>
</feature>
<feature type="compositionally biased region" description="Basic residues" evidence="4">
    <location>
        <begin position="490"/>
        <end position="500"/>
    </location>
</feature>
<feature type="compositionally biased region" description="Basic residues" evidence="4">
    <location>
        <begin position="522"/>
        <end position="534"/>
    </location>
</feature>
<feature type="modified residue" description="Phosphothreonine" evidence="2">
    <location>
        <position position="34"/>
    </location>
</feature>
<feature type="modified residue" description="Phosphoserine" evidence="2">
    <location>
        <position position="109"/>
    </location>
</feature>
<feature type="modified residue" description="Phosphoserine" evidence="2">
    <location>
        <position position="304"/>
    </location>
</feature>
<feature type="modified residue" description="Phosphoserine" evidence="2">
    <location>
        <position position="351"/>
    </location>
</feature>
<feature type="modified residue" description="Phosphoserine" evidence="7">
    <location>
        <position position="507"/>
    </location>
</feature>
<feature type="modified residue" description="Phosphoserine" evidence="7">
    <location>
        <position position="519"/>
    </location>
</feature>
<feature type="cross-link" description="Glycyl lysine isopeptide (Lys-Gly) (interchain with G-Cter in SUMO2)" evidence="2">
    <location>
        <position position="157"/>
    </location>
</feature>
<feature type="cross-link" description="Glycyl lysine isopeptide (Lys-Gly) (interchain with G-Cter in SUMO2)" evidence="2">
    <location>
        <position position="353"/>
    </location>
</feature>
<feature type="cross-link" description="Glycyl lysine isopeptide (Lys-Gly) (interchain with G-Cter in SUMO2)" evidence="2">
    <location>
        <position position="411"/>
    </location>
</feature>
<feature type="cross-link" description="Glycyl lysine isopeptide (Lys-Gly) (interchain with G-Cter in SUMO2)" evidence="2">
    <location>
        <position position="415"/>
    </location>
</feature>
<feature type="cross-link" description="Glycyl lysine isopeptide (Lys-Gly) (interchain with G-Cter in SUMO2)" evidence="2">
    <location>
        <position position="422"/>
    </location>
</feature>
<feature type="cross-link" description="Glycyl lysine isopeptide (Lys-Gly) (interchain with G-Cter in SUMO2)" evidence="2">
    <location>
        <position position="426"/>
    </location>
</feature>
<feature type="cross-link" description="Glycyl lysine isopeptide (Lys-Gly) (interchain with G-Cter in SUMO2)" evidence="2">
    <location>
        <position position="441"/>
    </location>
</feature>
<feature type="cross-link" description="Glycyl lysine isopeptide (Lys-Gly) (interchain with G-Cter in SUMO2)" evidence="2">
    <location>
        <position position="444"/>
    </location>
</feature>
<feature type="cross-link" description="Glycyl lysine isopeptide (Lys-Gly) (interchain with G-Cter in SUMO2)" evidence="2">
    <location>
        <position position="465"/>
    </location>
</feature>
<feature type="cross-link" description="Glycyl lysine isopeptide (Lys-Gly) (interchain with G-Cter in SUMO); alternate" evidence="1">
    <location>
        <position position="467"/>
    </location>
</feature>
<feature type="cross-link" description="Glycyl lysine isopeptide (Lys-Gly) (interchain with G-Cter in SUMO1); alternate" evidence="2">
    <location>
        <position position="467"/>
    </location>
</feature>
<feature type="cross-link" description="Glycyl lysine isopeptide (Lys-Gly) (interchain with G-Cter in SUMO2); alternate" evidence="2">
    <location>
        <position position="467"/>
    </location>
</feature>
<feature type="cross-link" description="Glycyl lysine isopeptide (Lys-Gly) (interchain with G-Cter in SUMO2)" evidence="2">
    <location>
        <position position="490"/>
    </location>
</feature>
<feature type="cross-link" description="Glycyl lysine isopeptide (Lys-Gly) (interchain with G-Cter in SUMO); alternate" evidence="1">
    <location>
        <position position="502"/>
    </location>
</feature>
<feature type="cross-link" description="Glycyl lysine isopeptide (Lys-Gly) (interchain with G-Cter in SUMO2); alternate" evidence="2">
    <location>
        <position position="502"/>
    </location>
</feature>
<feature type="sequence conflict" description="In Ref. 2; AAC23535." evidence="6" ref="2">
    <original>R</original>
    <variation>K</variation>
    <location>
        <position position="396"/>
    </location>
</feature>
<feature type="sequence conflict" description="In Ref. 2; AAC23535." evidence="6" ref="2">
    <original>A</original>
    <variation>K</variation>
    <location>
        <position position="459"/>
    </location>
</feature>
<gene>
    <name type="primary">Nop58</name>
    <name type="synonym">Nap65</name>
    <name type="synonym">Nol5</name>
    <name type="synonym">Nop5</name>
</gene>
<reference key="1">
    <citation type="journal article" date="2000" name="Mol. Biol. Cell">
        <title>Conserved composition of mammalian box H/ACA and box C/D small nucleolar ribonucleoprotein particles and their interaction with the common factor Nopp140.</title>
        <authorList>
            <person name="Yang Y."/>
            <person name="Isaac C."/>
            <person name="Wang C."/>
            <person name="Dragon F."/>
            <person name="Pogacic V."/>
            <person name="Meier U.T."/>
        </authorList>
    </citation>
    <scope>NUCLEOTIDE SEQUENCE [MRNA]</scope>
    <scope>PROTEIN SEQUENCE OF 1-22</scope>
    <scope>INTERACTION WITH NOLC1</scope>
</reference>
<reference key="2">
    <citation type="submission" date="1998-06" db="EMBL/GenBank/DDBJ databases">
        <authorList>
            <person name="Hatton D."/>
            <person name="Gray J.C."/>
        </authorList>
    </citation>
    <scope>NUCLEOTIDE SEQUENCE [MRNA] OF 1-461</scope>
</reference>
<reference key="3">
    <citation type="journal article" date="2012" name="Nat. Commun.">
        <title>Quantitative maps of protein phosphorylation sites across 14 different rat organs and tissues.</title>
        <authorList>
            <person name="Lundby A."/>
            <person name="Secher A."/>
            <person name="Lage K."/>
            <person name="Nordsborg N.B."/>
            <person name="Dmytriyev A."/>
            <person name="Lundby C."/>
            <person name="Olsen J.V."/>
        </authorList>
    </citation>
    <scope>PHOSPHORYLATION [LARGE SCALE ANALYSIS] AT SER-507 AND SER-519</scope>
    <scope>IDENTIFICATION BY MASS SPECTROMETRY [LARGE SCALE ANALYSIS]</scope>
</reference>